<protein>
    <recommendedName>
        <fullName>Outer membrane usher protein PsaC</fullName>
    </recommendedName>
</protein>
<organism>
    <name type="scientific">Yersinia pestis</name>
    <dbReference type="NCBI Taxonomy" id="632"/>
    <lineage>
        <taxon>Bacteria</taxon>
        <taxon>Pseudomonadati</taxon>
        <taxon>Pseudomonadota</taxon>
        <taxon>Gammaproteobacteria</taxon>
        <taxon>Enterobacterales</taxon>
        <taxon>Yersiniaceae</taxon>
        <taxon>Yersinia</taxon>
    </lineage>
</organism>
<dbReference type="EMBL" id="X97759">
    <property type="protein sequence ID" value="CAA66357.1"/>
    <property type="status" value="ALT_INIT"/>
    <property type="molecule type" value="Genomic_DNA"/>
</dbReference>
<dbReference type="EMBL" id="AL590842">
    <property type="protein sequence ID" value="CAL19958.1"/>
    <property type="molecule type" value="Genomic_DNA"/>
</dbReference>
<dbReference type="EMBL" id="AE009952">
    <property type="protein sequence ID" value="AAM86431.1"/>
    <property type="molecule type" value="Genomic_DNA"/>
</dbReference>
<dbReference type="EMBL" id="AE017042">
    <property type="protein sequence ID" value="AAS61530.1"/>
    <property type="molecule type" value="Genomic_DNA"/>
</dbReference>
<dbReference type="EMBL" id="M86713">
    <property type="protein sequence ID" value="AAA27664.1"/>
    <property type="status" value="ALT_INIT"/>
    <property type="molecule type" value="Genomic_DNA"/>
</dbReference>
<dbReference type="PIR" id="AD0159">
    <property type="entry name" value="AD0159"/>
</dbReference>
<dbReference type="RefSeq" id="YP_002346330.1">
    <property type="nucleotide sequence ID" value="NC_003143.1"/>
</dbReference>
<dbReference type="SMR" id="P31527"/>
<dbReference type="IntAct" id="P31527">
    <property type="interactions" value="1"/>
</dbReference>
<dbReference type="STRING" id="214092.YPO1305"/>
<dbReference type="PaxDb" id="214092-YPO1305"/>
<dbReference type="DNASU" id="1147827"/>
<dbReference type="EnsemblBacteria" id="AAS61530">
    <property type="protein sequence ID" value="AAS61530"/>
    <property type="gene ID" value="YP_1287"/>
</dbReference>
<dbReference type="KEGG" id="ype:YPO1305"/>
<dbReference type="KEGG" id="ypk:y2880"/>
<dbReference type="KEGG" id="ypm:YP_1287"/>
<dbReference type="PATRIC" id="fig|214092.21.peg.1615"/>
<dbReference type="eggNOG" id="COG3188">
    <property type="taxonomic scope" value="Bacteria"/>
</dbReference>
<dbReference type="HOGENOM" id="CLU_009120_3_1_6"/>
<dbReference type="OMA" id="TPFLAPC"/>
<dbReference type="OrthoDB" id="6554712at2"/>
<dbReference type="Proteomes" id="UP000000815">
    <property type="component" value="Chromosome"/>
</dbReference>
<dbReference type="Proteomes" id="UP000001019">
    <property type="component" value="Chromosome"/>
</dbReference>
<dbReference type="Proteomes" id="UP000002490">
    <property type="component" value="Chromosome"/>
</dbReference>
<dbReference type="GO" id="GO:0009279">
    <property type="term" value="C:cell outer membrane"/>
    <property type="evidence" value="ECO:0000318"/>
    <property type="project" value="GO_Central"/>
</dbReference>
<dbReference type="GO" id="GO:0015473">
    <property type="term" value="F:fimbrial usher porin activity"/>
    <property type="evidence" value="ECO:0000318"/>
    <property type="project" value="GO_Central"/>
</dbReference>
<dbReference type="GO" id="GO:0009297">
    <property type="term" value="P:pilus assembly"/>
    <property type="evidence" value="ECO:0000318"/>
    <property type="project" value="GO_Central"/>
</dbReference>
<dbReference type="FunFam" id="2.60.40.2070:FF:000001">
    <property type="entry name" value="Fimbrial outer membrane usher protein"/>
    <property type="match status" value="1"/>
</dbReference>
<dbReference type="FunFam" id="3.10.20.410:FF:000001">
    <property type="entry name" value="Fimbrial outer membrane usher protein"/>
    <property type="match status" value="1"/>
</dbReference>
<dbReference type="FunFam" id="2.60.40.3110:FF:000001">
    <property type="entry name" value="Putative fimbrial outer membrane usher"/>
    <property type="match status" value="1"/>
</dbReference>
<dbReference type="Gene3D" id="2.60.40.2070">
    <property type="match status" value="1"/>
</dbReference>
<dbReference type="Gene3D" id="2.60.40.3110">
    <property type="match status" value="1"/>
</dbReference>
<dbReference type="Gene3D" id="3.10.20.410">
    <property type="match status" value="1"/>
</dbReference>
<dbReference type="Gene3D" id="2.60.40.2610">
    <property type="entry name" value="Outer membrane usher protein FimD, plug domain"/>
    <property type="match status" value="1"/>
</dbReference>
<dbReference type="InterPro" id="IPR000015">
    <property type="entry name" value="Fimb_usher"/>
</dbReference>
<dbReference type="InterPro" id="IPR018030">
    <property type="entry name" value="Fimbrial_membr_usher_CS"/>
</dbReference>
<dbReference type="InterPro" id="IPR042186">
    <property type="entry name" value="FimD_plug_dom"/>
</dbReference>
<dbReference type="InterPro" id="IPR025949">
    <property type="entry name" value="PapC-like_C"/>
</dbReference>
<dbReference type="InterPro" id="IPR043142">
    <property type="entry name" value="PapC-like_C_sf"/>
</dbReference>
<dbReference type="InterPro" id="IPR025885">
    <property type="entry name" value="PapC_N"/>
</dbReference>
<dbReference type="InterPro" id="IPR037224">
    <property type="entry name" value="PapC_N_sf"/>
</dbReference>
<dbReference type="PANTHER" id="PTHR30451:SF9">
    <property type="entry name" value="F1 CAPSULE-ANCHORING PROTEIN"/>
    <property type="match status" value="1"/>
</dbReference>
<dbReference type="PANTHER" id="PTHR30451">
    <property type="entry name" value="OUTER MEMBRANE USHER PROTEIN"/>
    <property type="match status" value="1"/>
</dbReference>
<dbReference type="Pfam" id="PF13953">
    <property type="entry name" value="PapC_C"/>
    <property type="match status" value="1"/>
</dbReference>
<dbReference type="Pfam" id="PF13954">
    <property type="entry name" value="PapC_N"/>
    <property type="match status" value="1"/>
</dbReference>
<dbReference type="Pfam" id="PF00577">
    <property type="entry name" value="Usher"/>
    <property type="match status" value="1"/>
</dbReference>
<dbReference type="SUPFAM" id="SSF141729">
    <property type="entry name" value="FimD N-terminal domain-like"/>
    <property type="match status" value="1"/>
</dbReference>
<dbReference type="PROSITE" id="PS01151">
    <property type="entry name" value="FIMBRIAL_USHER"/>
    <property type="match status" value="1"/>
</dbReference>
<accession>P31527</accession>
<accession>Q0WHA8</accession>
<accession>Q56980</accession>
<keyword id="KW-0998">Cell outer membrane</keyword>
<keyword id="KW-1029">Fimbrium biogenesis</keyword>
<keyword id="KW-0472">Membrane</keyword>
<keyword id="KW-1185">Reference proteome</keyword>
<keyword id="KW-0732">Signal</keyword>
<keyword id="KW-0812">Transmembrane</keyword>
<keyword id="KW-1134">Transmembrane beta strand</keyword>
<keyword id="KW-0813">Transport</keyword>
<feature type="signal peptide" evidence="2">
    <location>
        <begin position="1"/>
        <end position="23"/>
    </location>
</feature>
<feature type="chain" id="PRO_0000009326" description="Outer membrane usher protein PsaC">
    <location>
        <begin position="24"/>
        <end position="837"/>
    </location>
</feature>
<feature type="sequence conflict" description="In Ref. 1 and 5." evidence="3" ref="1 5">
    <original>ANISET</original>
    <variation>EISVKP</variation>
    <location>
        <begin position="172"/>
        <end position="177"/>
    </location>
</feature>
<feature type="sequence conflict" description="In Ref. 5." evidence="3" ref="5">
    <original>QFRQNGGYRRSQYIQLYPG</original>
    <variation>SFVKMVDTGVHNISSYIPV</variation>
    <location>
        <begin position="178"/>
        <end position="196"/>
    </location>
</feature>
<feature type="sequence conflict" description="In Ref. 1; CAA66357." evidence="3" ref="1">
    <original>R</original>
    <variation>A</variation>
    <location>
        <position position="395"/>
    </location>
</feature>
<feature type="sequence conflict" description="In Ref. 1; CAA66357." evidence="3" ref="1">
    <original>E</original>
    <variation>K</variation>
    <location>
        <position position="437"/>
    </location>
</feature>
<feature type="sequence conflict" description="In Ref. 1; CAA66357." evidence="3" ref="1">
    <original>ETGQLLVQW</original>
    <variation>KQGSYWCM</variation>
    <location>
        <begin position="797"/>
        <end position="805"/>
    </location>
</feature>
<comment type="function">
    <text>Involved in the export and assembly of PsaA (pH 6) fimbrial subunits across the outer membrane.</text>
</comment>
<comment type="subcellular location">
    <subcellularLocation>
        <location evidence="1">Cell outer membrane</location>
        <topology evidence="1">Multi-pass membrane protein</topology>
    </subcellularLocation>
</comment>
<comment type="similarity">
    <text evidence="3">Belongs to the fimbrial export usher family.</text>
</comment>
<comment type="sequence caution" evidence="3">
    <conflict type="erroneous initiation">
        <sequence resource="EMBL-CDS" id="AAA27664"/>
    </conflict>
</comment>
<comment type="sequence caution" evidence="3">
    <conflict type="erroneous initiation">
        <sequence resource="EMBL-CDS" id="CAA66357"/>
    </conflict>
</comment>
<name>PSAC_YERPE</name>
<proteinExistence type="inferred from homology"/>
<sequence>MKKLIVQFTTITLLMSTSFLVGAQRYSFDPNLLVDGNNNTDTSLFEQGNELPGTYLVDIILNGNKVDSTNVTFHSEKSPSGEPFLQSCLTKEQLSRYGVDVDAYPELSPALKNSQTNPCVNLAAIPQASEEFQFYNMQLVLSIPQAALRPEGEVPIERWDDGITAFLLNYMANISETQFRQNGGYRRSQYIQLYPGLNLGAWRVRNATNWSQSGDRGGKWQSAYTYATRGIYRLKSRVTLGESYTPGDFFDSIPFRGVMLGDDPNMQPSNQRDFIPVVRGIARSQAQVEIRQNGYLIYSTVVPPGPFELSDVIPSKSGSDLHVRVLESNGASQAFIVPYEVPAIALRKGHLRYNLVAGQYRPANADVETPPVAQATVAYGLPWNLTAFIGEQWSRHYQATSAGLGGLLGEYGALSSSITQATSQYHHQQPVKGQAWEVRYNKTLQASDTSFSLVNSQYSTNGFSTLSDVLQSYRQSGSGDNRDKIDENSRSRDLRNQISAVIGQSLGKFGYLNLNWSRQVYRGPIPAKNSLGIHYNLNVGNSFWALSWVQNANENKNDRILSLSVSIPLGGHHDTYASYRMTSSNGSNDHEIGMYGQAFDSRLSWSVRQAEHYGQPNSGHNSGSLRLGWQGSYGNIAGNYYYTPSIRQLSADVSGGAIIHRHGLTLGPQINGTSVLVEVPGVGGVTTTEDRRLKTDFRGYSIVSGLSPYQEHDIVLETADLPPDAEVAKTDTKVLPTEGAIVRASFSPQIGAKALMTITRANGQTIPFGAMASLVNQSANAAIVDEGGKAYLTGLPETGQLLVQWGKDAGQQCRVDYQLSPAEKGDTGLYMLSGVCH</sequence>
<evidence type="ECO:0000250" key="1"/>
<evidence type="ECO:0000255" key="2"/>
<evidence type="ECO:0000305" key="3"/>
<gene>
    <name type="primary">psaC</name>
    <name type="ordered locus">YPO1305</name>
    <name type="ordered locus">y2880</name>
    <name type="ordered locus">YP_1287</name>
</gene>
<reference key="1">
    <citation type="submission" date="1996-05" db="EMBL/GenBank/DDBJ databases">
        <authorList>
            <person name="Cherepavov P.A."/>
        </authorList>
    </citation>
    <scope>NUCLEOTIDE SEQUENCE [GENOMIC DNA]</scope>
    <source>
        <strain>EV 76</strain>
    </source>
</reference>
<reference key="2">
    <citation type="journal article" date="2001" name="Nature">
        <title>Genome sequence of Yersinia pestis, the causative agent of plague.</title>
        <authorList>
            <person name="Parkhill J."/>
            <person name="Wren B.W."/>
            <person name="Thomson N.R."/>
            <person name="Titball R.W."/>
            <person name="Holden M.T.G."/>
            <person name="Prentice M.B."/>
            <person name="Sebaihia M."/>
            <person name="James K.D."/>
            <person name="Churcher C.M."/>
            <person name="Mungall K.L."/>
            <person name="Baker S."/>
            <person name="Basham D."/>
            <person name="Bentley S.D."/>
            <person name="Brooks K."/>
            <person name="Cerdeno-Tarraga A.-M."/>
            <person name="Chillingworth T."/>
            <person name="Cronin A."/>
            <person name="Davies R.M."/>
            <person name="Davis P."/>
            <person name="Dougan G."/>
            <person name="Feltwell T."/>
            <person name="Hamlin N."/>
            <person name="Holroyd S."/>
            <person name="Jagels K."/>
            <person name="Karlyshev A.V."/>
            <person name="Leather S."/>
            <person name="Moule S."/>
            <person name="Oyston P.C.F."/>
            <person name="Quail M.A."/>
            <person name="Rutherford K.M."/>
            <person name="Simmonds M."/>
            <person name="Skelton J."/>
            <person name="Stevens K."/>
            <person name="Whitehead S."/>
            <person name="Barrell B.G."/>
        </authorList>
    </citation>
    <scope>NUCLEOTIDE SEQUENCE [LARGE SCALE GENOMIC DNA]</scope>
    <source>
        <strain>CO-92 / Biovar Orientalis</strain>
    </source>
</reference>
<reference key="3">
    <citation type="journal article" date="2002" name="J. Bacteriol.">
        <title>Genome sequence of Yersinia pestis KIM.</title>
        <authorList>
            <person name="Deng W."/>
            <person name="Burland V."/>
            <person name="Plunkett G. III"/>
            <person name="Boutin A."/>
            <person name="Mayhew G.F."/>
            <person name="Liss P."/>
            <person name="Perna N.T."/>
            <person name="Rose D.J."/>
            <person name="Mau B."/>
            <person name="Zhou S."/>
            <person name="Schwartz D.C."/>
            <person name="Fetherston J.D."/>
            <person name="Lindler L.E."/>
            <person name="Brubaker R.R."/>
            <person name="Plano G.V."/>
            <person name="Straley S.C."/>
            <person name="McDonough K.A."/>
            <person name="Nilles M.L."/>
            <person name="Matson J.S."/>
            <person name="Blattner F.R."/>
            <person name="Perry R.D."/>
        </authorList>
    </citation>
    <scope>NUCLEOTIDE SEQUENCE [LARGE SCALE GENOMIC DNA]</scope>
    <source>
        <strain>KIM10+ / Biovar Mediaevalis</strain>
    </source>
</reference>
<reference key="4">
    <citation type="journal article" date="2004" name="DNA Res.">
        <title>Complete genome sequence of Yersinia pestis strain 91001, an isolate avirulent to humans.</title>
        <authorList>
            <person name="Song Y."/>
            <person name="Tong Z."/>
            <person name="Wang J."/>
            <person name="Wang L."/>
            <person name="Guo Z."/>
            <person name="Han Y."/>
            <person name="Zhang J."/>
            <person name="Pei D."/>
            <person name="Zhou D."/>
            <person name="Qin H."/>
            <person name="Pang X."/>
            <person name="Han Y."/>
            <person name="Zhai J."/>
            <person name="Li M."/>
            <person name="Cui B."/>
            <person name="Qi Z."/>
            <person name="Jin L."/>
            <person name="Dai R."/>
            <person name="Chen F."/>
            <person name="Li S."/>
            <person name="Ye C."/>
            <person name="Du Z."/>
            <person name="Lin W."/>
            <person name="Wang J."/>
            <person name="Yu J."/>
            <person name="Yang H."/>
            <person name="Wang J."/>
            <person name="Huang P."/>
            <person name="Yang R."/>
        </authorList>
    </citation>
    <scope>NUCLEOTIDE SEQUENCE [LARGE SCALE GENOMIC DNA]</scope>
    <source>
        <strain>91001 / Biovar Mediaevalis</strain>
    </source>
</reference>
<reference key="5">
    <citation type="journal article" date="1993" name="Mol. Microbiol.">
        <title>Yersinia pestis pH 6 antigen forms fimbriae and is induced by intracellular association with macrophages.</title>
        <authorList>
            <person name="Lindler L.E."/>
            <person name="Tall B.D."/>
        </authorList>
    </citation>
    <scope>NUCLEOTIDE SEQUENCE [GENOMIC DNA] OF 1-196</scope>
</reference>